<reference key="1">
    <citation type="submission" date="2009-05" db="EMBL/GenBank/DDBJ databases">
        <title>Complete sequence of Tolumonas auensis DSM 9187.</title>
        <authorList>
            <consortium name="US DOE Joint Genome Institute"/>
            <person name="Lucas S."/>
            <person name="Copeland A."/>
            <person name="Lapidus A."/>
            <person name="Glavina del Rio T."/>
            <person name="Tice H."/>
            <person name="Bruce D."/>
            <person name="Goodwin L."/>
            <person name="Pitluck S."/>
            <person name="Chertkov O."/>
            <person name="Brettin T."/>
            <person name="Detter J.C."/>
            <person name="Han C."/>
            <person name="Larimer F."/>
            <person name="Land M."/>
            <person name="Hauser L."/>
            <person name="Kyrpides N."/>
            <person name="Mikhailova N."/>
            <person name="Spring S."/>
            <person name="Beller H."/>
        </authorList>
    </citation>
    <scope>NUCLEOTIDE SEQUENCE [LARGE SCALE GENOMIC DNA]</scope>
    <source>
        <strain>DSM 9187 / NBRC 110442 / TA 4</strain>
    </source>
</reference>
<sequence length="472" mass="52560">MNSTIAEAIKEEGIENYLKNQQHKSLLRFLTCGSVDDGKSTLIGRLLHDSRQVYEDQLKTLHSDSQKIGTTGEKLDFALLVDGLQAEREQGITIDVAYRYFSTPKRKFIIADTPGHEQYTRNMATGASTCDLAIILIDARRGVLEQTRRHSFIASLLGIRQFIVAVNKMDLVNFDEKVFDSIKKEYLEFASGLPKTDIRVVPISALDGENLVVNSELTPWYQGEPLLTMLENAEVGTRDLDLPFRMPVQLVSRPNLDFRGYMGTVAAGVVKPGDVVKVLPSGKESKVKRIVTFDGDLDYALPGEAVTITLEDEIDISRGDLLVAPDAETQVTQHVLANVVWMTEEPLQANRQYDIKLATRKTRGHVDAIRHRIDVNTLEKHDATELKLNEIGLLELSLTNAVGVDPYNTVRDTGSFIIIDRLSNVTIGAGMVVEALAGKTAGKAEFSEFELEFNALVRKHFPHWQALDISKL</sequence>
<keyword id="KW-0067">ATP-binding</keyword>
<keyword id="KW-0342">GTP-binding</keyword>
<keyword id="KW-0547">Nucleotide-binding</keyword>
<keyword id="KW-0548">Nucleotidyltransferase</keyword>
<keyword id="KW-1185">Reference proteome</keyword>
<keyword id="KW-0808">Transferase</keyword>
<protein>
    <recommendedName>
        <fullName evidence="2">Sulfate adenylyltransferase subunit 1</fullName>
        <ecNumber evidence="2">2.7.7.4</ecNumber>
    </recommendedName>
    <alternativeName>
        <fullName evidence="2">ATP-sulfurylase large subunit</fullName>
    </alternativeName>
    <alternativeName>
        <fullName evidence="2">Sulfate adenylate transferase</fullName>
        <shortName evidence="2">SAT</shortName>
    </alternativeName>
</protein>
<comment type="function">
    <text evidence="2">With CysD forms the ATP sulfurylase (ATPS) that catalyzes the adenylation of sulfate producing adenosine 5'-phosphosulfate (APS) and diphosphate, the first enzymatic step in sulfur assimilation pathway. APS synthesis involves the formation of a high-energy phosphoric-sulfuric acid anhydride bond driven by GTP hydrolysis by CysN coupled to ATP hydrolysis by CysD.</text>
</comment>
<comment type="catalytic activity">
    <reaction evidence="2">
        <text>sulfate + ATP + H(+) = adenosine 5'-phosphosulfate + diphosphate</text>
        <dbReference type="Rhea" id="RHEA:18133"/>
        <dbReference type="ChEBI" id="CHEBI:15378"/>
        <dbReference type="ChEBI" id="CHEBI:16189"/>
        <dbReference type="ChEBI" id="CHEBI:30616"/>
        <dbReference type="ChEBI" id="CHEBI:33019"/>
        <dbReference type="ChEBI" id="CHEBI:58243"/>
        <dbReference type="EC" id="2.7.7.4"/>
    </reaction>
</comment>
<comment type="pathway">
    <text evidence="2">Sulfur metabolism; hydrogen sulfide biosynthesis; sulfite from sulfate: step 1/3.</text>
</comment>
<comment type="subunit">
    <text evidence="2">Heterodimer composed of CysD, the smaller subunit, and CysN.</text>
</comment>
<comment type="similarity">
    <text evidence="2">Belongs to the TRAFAC class translation factor GTPase superfamily. Classic translation factor GTPase family. CysN/NodQ subfamily.</text>
</comment>
<evidence type="ECO:0000250" key="1"/>
<evidence type="ECO:0000255" key="2">
    <source>
        <dbReference type="HAMAP-Rule" id="MF_00062"/>
    </source>
</evidence>
<dbReference type="EC" id="2.7.7.4" evidence="2"/>
<dbReference type="EMBL" id="CP001616">
    <property type="protein sequence ID" value="ACQ94138.1"/>
    <property type="molecule type" value="Genomic_DNA"/>
</dbReference>
<dbReference type="RefSeq" id="WP_015879587.1">
    <property type="nucleotide sequence ID" value="NC_012691.1"/>
</dbReference>
<dbReference type="SMR" id="C4LAG3"/>
<dbReference type="STRING" id="595494.Tola_2544"/>
<dbReference type="KEGG" id="tau:Tola_2544"/>
<dbReference type="eggNOG" id="COG2895">
    <property type="taxonomic scope" value="Bacteria"/>
</dbReference>
<dbReference type="HOGENOM" id="CLU_007265_5_2_6"/>
<dbReference type="OrthoDB" id="9804504at2"/>
<dbReference type="UniPathway" id="UPA00140">
    <property type="reaction ID" value="UER00204"/>
</dbReference>
<dbReference type="Proteomes" id="UP000009073">
    <property type="component" value="Chromosome"/>
</dbReference>
<dbReference type="GO" id="GO:0005524">
    <property type="term" value="F:ATP binding"/>
    <property type="evidence" value="ECO:0007669"/>
    <property type="project" value="UniProtKB-KW"/>
</dbReference>
<dbReference type="GO" id="GO:0005525">
    <property type="term" value="F:GTP binding"/>
    <property type="evidence" value="ECO:0007669"/>
    <property type="project" value="UniProtKB-UniRule"/>
</dbReference>
<dbReference type="GO" id="GO:0003924">
    <property type="term" value="F:GTPase activity"/>
    <property type="evidence" value="ECO:0007669"/>
    <property type="project" value="InterPro"/>
</dbReference>
<dbReference type="GO" id="GO:0097216">
    <property type="term" value="F:guanosine tetraphosphate binding"/>
    <property type="evidence" value="ECO:0007669"/>
    <property type="project" value="UniProtKB-ARBA"/>
</dbReference>
<dbReference type="GO" id="GO:0004781">
    <property type="term" value="F:sulfate adenylyltransferase (ATP) activity"/>
    <property type="evidence" value="ECO:0007669"/>
    <property type="project" value="UniProtKB-UniRule"/>
</dbReference>
<dbReference type="GO" id="GO:0070814">
    <property type="term" value="P:hydrogen sulfide biosynthetic process"/>
    <property type="evidence" value="ECO:0007669"/>
    <property type="project" value="UniProtKB-UniRule"/>
</dbReference>
<dbReference type="GO" id="GO:0000103">
    <property type="term" value="P:sulfate assimilation"/>
    <property type="evidence" value="ECO:0007669"/>
    <property type="project" value="UniProtKB-UniRule"/>
</dbReference>
<dbReference type="CDD" id="cd04166">
    <property type="entry name" value="CysN_ATPS"/>
    <property type="match status" value="1"/>
</dbReference>
<dbReference type="CDD" id="cd03695">
    <property type="entry name" value="CysN_NodQ_II"/>
    <property type="match status" value="1"/>
</dbReference>
<dbReference type="CDD" id="cd04095">
    <property type="entry name" value="CysN_NoDQ_III"/>
    <property type="match status" value="1"/>
</dbReference>
<dbReference type="FunFam" id="2.40.30.10:FF:000027">
    <property type="entry name" value="Sulfate adenylyltransferase subunit 1"/>
    <property type="match status" value="1"/>
</dbReference>
<dbReference type="FunFam" id="3.40.50.300:FF:000119">
    <property type="entry name" value="Sulfate adenylyltransferase subunit 1"/>
    <property type="match status" value="1"/>
</dbReference>
<dbReference type="Gene3D" id="3.40.50.300">
    <property type="entry name" value="P-loop containing nucleotide triphosphate hydrolases"/>
    <property type="match status" value="1"/>
</dbReference>
<dbReference type="Gene3D" id="2.40.30.10">
    <property type="entry name" value="Translation factors"/>
    <property type="match status" value="2"/>
</dbReference>
<dbReference type="HAMAP" id="MF_00062">
    <property type="entry name" value="Sulf_adenylyltr_sub1"/>
    <property type="match status" value="1"/>
</dbReference>
<dbReference type="InterPro" id="IPR041757">
    <property type="entry name" value="CysN_GTP-bd"/>
</dbReference>
<dbReference type="InterPro" id="IPR044138">
    <property type="entry name" value="CysN_II"/>
</dbReference>
<dbReference type="InterPro" id="IPR044139">
    <property type="entry name" value="CysN_NoDQ_III"/>
</dbReference>
<dbReference type="InterPro" id="IPR004161">
    <property type="entry name" value="EFTu-like_2"/>
</dbReference>
<dbReference type="InterPro" id="IPR031157">
    <property type="entry name" value="G_TR_CS"/>
</dbReference>
<dbReference type="InterPro" id="IPR054696">
    <property type="entry name" value="GTP-eEF1A_C"/>
</dbReference>
<dbReference type="InterPro" id="IPR027417">
    <property type="entry name" value="P-loop_NTPase"/>
</dbReference>
<dbReference type="InterPro" id="IPR005225">
    <property type="entry name" value="Small_GTP-bd"/>
</dbReference>
<dbReference type="InterPro" id="IPR011779">
    <property type="entry name" value="SO4_adenylTrfase_lsu"/>
</dbReference>
<dbReference type="InterPro" id="IPR000795">
    <property type="entry name" value="T_Tr_GTP-bd_dom"/>
</dbReference>
<dbReference type="InterPro" id="IPR050100">
    <property type="entry name" value="TRAFAC_GTPase_members"/>
</dbReference>
<dbReference type="InterPro" id="IPR009000">
    <property type="entry name" value="Transl_B-barrel_sf"/>
</dbReference>
<dbReference type="InterPro" id="IPR009001">
    <property type="entry name" value="Transl_elong_EF1A/Init_IF2_C"/>
</dbReference>
<dbReference type="NCBIfam" id="TIGR02034">
    <property type="entry name" value="CysN"/>
    <property type="match status" value="1"/>
</dbReference>
<dbReference type="NCBIfam" id="NF003478">
    <property type="entry name" value="PRK05124.1"/>
    <property type="match status" value="1"/>
</dbReference>
<dbReference type="NCBIfam" id="TIGR00231">
    <property type="entry name" value="small_GTP"/>
    <property type="match status" value="1"/>
</dbReference>
<dbReference type="PANTHER" id="PTHR23115">
    <property type="entry name" value="TRANSLATION FACTOR"/>
    <property type="match status" value="1"/>
</dbReference>
<dbReference type="Pfam" id="PF22594">
    <property type="entry name" value="GTP-eEF1A_C"/>
    <property type="match status" value="1"/>
</dbReference>
<dbReference type="Pfam" id="PF00009">
    <property type="entry name" value="GTP_EFTU"/>
    <property type="match status" value="1"/>
</dbReference>
<dbReference type="Pfam" id="PF03144">
    <property type="entry name" value="GTP_EFTU_D2"/>
    <property type="match status" value="1"/>
</dbReference>
<dbReference type="PRINTS" id="PR00315">
    <property type="entry name" value="ELONGATNFCT"/>
</dbReference>
<dbReference type="SUPFAM" id="SSF50465">
    <property type="entry name" value="EF-Tu/eEF-1alpha/eIF2-gamma C-terminal domain"/>
    <property type="match status" value="1"/>
</dbReference>
<dbReference type="SUPFAM" id="SSF52540">
    <property type="entry name" value="P-loop containing nucleoside triphosphate hydrolases"/>
    <property type="match status" value="1"/>
</dbReference>
<dbReference type="SUPFAM" id="SSF50447">
    <property type="entry name" value="Translation proteins"/>
    <property type="match status" value="1"/>
</dbReference>
<dbReference type="PROSITE" id="PS00301">
    <property type="entry name" value="G_TR_1"/>
    <property type="match status" value="1"/>
</dbReference>
<dbReference type="PROSITE" id="PS51722">
    <property type="entry name" value="G_TR_2"/>
    <property type="match status" value="1"/>
</dbReference>
<accession>C4LAG3</accession>
<proteinExistence type="inferred from homology"/>
<organism>
    <name type="scientific">Tolumonas auensis (strain DSM 9187 / NBRC 110442 / TA 4)</name>
    <dbReference type="NCBI Taxonomy" id="595494"/>
    <lineage>
        <taxon>Bacteria</taxon>
        <taxon>Pseudomonadati</taxon>
        <taxon>Pseudomonadota</taxon>
        <taxon>Gammaproteobacteria</taxon>
        <taxon>Aeromonadales</taxon>
        <taxon>Aeromonadaceae</taxon>
        <taxon>Tolumonas</taxon>
    </lineage>
</organism>
<feature type="chain" id="PRO_1000202394" description="Sulfate adenylyltransferase subunit 1">
    <location>
        <begin position="1"/>
        <end position="472"/>
    </location>
</feature>
<feature type="domain" description="tr-type G">
    <location>
        <begin position="24"/>
        <end position="240"/>
    </location>
</feature>
<feature type="region of interest" description="G1" evidence="1">
    <location>
        <begin position="33"/>
        <end position="40"/>
    </location>
</feature>
<feature type="region of interest" description="G2" evidence="1">
    <location>
        <begin position="91"/>
        <end position="95"/>
    </location>
</feature>
<feature type="region of interest" description="G3" evidence="1">
    <location>
        <begin position="112"/>
        <end position="115"/>
    </location>
</feature>
<feature type="region of interest" description="G4" evidence="1">
    <location>
        <begin position="167"/>
        <end position="170"/>
    </location>
</feature>
<feature type="region of interest" description="G5" evidence="1">
    <location>
        <begin position="204"/>
        <end position="206"/>
    </location>
</feature>
<feature type="binding site" evidence="2">
    <location>
        <begin position="33"/>
        <end position="40"/>
    </location>
    <ligand>
        <name>GTP</name>
        <dbReference type="ChEBI" id="CHEBI:37565"/>
    </ligand>
</feature>
<feature type="binding site" evidence="2">
    <location>
        <begin position="112"/>
        <end position="116"/>
    </location>
    <ligand>
        <name>GTP</name>
        <dbReference type="ChEBI" id="CHEBI:37565"/>
    </ligand>
</feature>
<feature type="binding site" evidence="2">
    <location>
        <begin position="167"/>
        <end position="170"/>
    </location>
    <ligand>
        <name>GTP</name>
        <dbReference type="ChEBI" id="CHEBI:37565"/>
    </ligand>
</feature>
<gene>
    <name evidence="2" type="primary">cysN</name>
    <name type="ordered locus">Tola_2544</name>
</gene>
<name>CYSN_TOLAT</name>